<evidence type="ECO:0000255" key="1">
    <source>
        <dbReference type="HAMAP-Rule" id="MF_00009"/>
    </source>
</evidence>
<organism>
    <name type="scientific">Escherichia coli O45:K1 (strain S88 / ExPEC)</name>
    <dbReference type="NCBI Taxonomy" id="585035"/>
    <lineage>
        <taxon>Bacteria</taxon>
        <taxon>Pseudomonadati</taxon>
        <taxon>Pseudomonadota</taxon>
        <taxon>Gammaproteobacteria</taxon>
        <taxon>Enterobacterales</taxon>
        <taxon>Enterobacteriaceae</taxon>
        <taxon>Escherichia</taxon>
    </lineage>
</organism>
<protein>
    <recommendedName>
        <fullName evidence="1">Endoribonuclease YbeY</fullName>
        <ecNumber evidence="1">3.1.-.-</ecNumber>
    </recommendedName>
</protein>
<reference key="1">
    <citation type="journal article" date="2009" name="PLoS Genet.">
        <title>Organised genome dynamics in the Escherichia coli species results in highly diverse adaptive paths.</title>
        <authorList>
            <person name="Touchon M."/>
            <person name="Hoede C."/>
            <person name="Tenaillon O."/>
            <person name="Barbe V."/>
            <person name="Baeriswyl S."/>
            <person name="Bidet P."/>
            <person name="Bingen E."/>
            <person name="Bonacorsi S."/>
            <person name="Bouchier C."/>
            <person name="Bouvet O."/>
            <person name="Calteau A."/>
            <person name="Chiapello H."/>
            <person name="Clermont O."/>
            <person name="Cruveiller S."/>
            <person name="Danchin A."/>
            <person name="Diard M."/>
            <person name="Dossat C."/>
            <person name="Karoui M.E."/>
            <person name="Frapy E."/>
            <person name="Garry L."/>
            <person name="Ghigo J.M."/>
            <person name="Gilles A.M."/>
            <person name="Johnson J."/>
            <person name="Le Bouguenec C."/>
            <person name="Lescat M."/>
            <person name="Mangenot S."/>
            <person name="Martinez-Jehanne V."/>
            <person name="Matic I."/>
            <person name="Nassif X."/>
            <person name="Oztas S."/>
            <person name="Petit M.A."/>
            <person name="Pichon C."/>
            <person name="Rouy Z."/>
            <person name="Ruf C.S."/>
            <person name="Schneider D."/>
            <person name="Tourret J."/>
            <person name="Vacherie B."/>
            <person name="Vallenet D."/>
            <person name="Medigue C."/>
            <person name="Rocha E.P.C."/>
            <person name="Denamur E."/>
        </authorList>
    </citation>
    <scope>NUCLEOTIDE SEQUENCE [LARGE SCALE GENOMIC DNA]</scope>
    <source>
        <strain>S88 / ExPEC</strain>
    </source>
</reference>
<keyword id="KW-0963">Cytoplasm</keyword>
<keyword id="KW-0255">Endonuclease</keyword>
<keyword id="KW-0378">Hydrolase</keyword>
<keyword id="KW-0479">Metal-binding</keyword>
<keyword id="KW-0540">Nuclease</keyword>
<keyword id="KW-1185">Reference proteome</keyword>
<keyword id="KW-0690">Ribosome biogenesis</keyword>
<keyword id="KW-0698">rRNA processing</keyword>
<keyword id="KW-0862">Zinc</keyword>
<gene>
    <name evidence="1" type="primary">ybeY</name>
    <name type="ordered locus">ECS88_0694</name>
</gene>
<proteinExistence type="inferred from homology"/>
<name>YBEY_ECO45</name>
<dbReference type="EC" id="3.1.-.-" evidence="1"/>
<dbReference type="EMBL" id="CU928161">
    <property type="protein sequence ID" value="CAR02034.1"/>
    <property type="molecule type" value="Genomic_DNA"/>
</dbReference>
<dbReference type="RefSeq" id="WP_000084469.1">
    <property type="nucleotide sequence ID" value="NC_011742.1"/>
</dbReference>
<dbReference type="SMR" id="B7MFS5"/>
<dbReference type="GeneID" id="93776823"/>
<dbReference type="KEGG" id="ecz:ECS88_0694"/>
<dbReference type="HOGENOM" id="CLU_106710_0_1_6"/>
<dbReference type="Proteomes" id="UP000000747">
    <property type="component" value="Chromosome"/>
</dbReference>
<dbReference type="GO" id="GO:0005737">
    <property type="term" value="C:cytoplasm"/>
    <property type="evidence" value="ECO:0007669"/>
    <property type="project" value="UniProtKB-SubCell"/>
</dbReference>
<dbReference type="GO" id="GO:0004222">
    <property type="term" value="F:metalloendopeptidase activity"/>
    <property type="evidence" value="ECO:0007669"/>
    <property type="project" value="InterPro"/>
</dbReference>
<dbReference type="GO" id="GO:0004521">
    <property type="term" value="F:RNA endonuclease activity"/>
    <property type="evidence" value="ECO:0007669"/>
    <property type="project" value="UniProtKB-UniRule"/>
</dbReference>
<dbReference type="GO" id="GO:0008270">
    <property type="term" value="F:zinc ion binding"/>
    <property type="evidence" value="ECO:0007669"/>
    <property type="project" value="UniProtKB-UniRule"/>
</dbReference>
<dbReference type="GO" id="GO:0006364">
    <property type="term" value="P:rRNA processing"/>
    <property type="evidence" value="ECO:0007669"/>
    <property type="project" value="UniProtKB-UniRule"/>
</dbReference>
<dbReference type="FunFam" id="3.40.390.30:FF:000001">
    <property type="entry name" value="Endoribonuclease YbeY"/>
    <property type="match status" value="1"/>
</dbReference>
<dbReference type="Gene3D" id="3.40.390.30">
    <property type="entry name" value="Metalloproteases ('zincins'), catalytic domain"/>
    <property type="match status" value="1"/>
</dbReference>
<dbReference type="HAMAP" id="MF_00009">
    <property type="entry name" value="Endoribonucl_YbeY"/>
    <property type="match status" value="1"/>
</dbReference>
<dbReference type="InterPro" id="IPR023091">
    <property type="entry name" value="MetalPrtase_cat_dom_sf_prd"/>
</dbReference>
<dbReference type="InterPro" id="IPR002036">
    <property type="entry name" value="YbeY"/>
</dbReference>
<dbReference type="InterPro" id="IPR020549">
    <property type="entry name" value="YbeY_CS"/>
</dbReference>
<dbReference type="NCBIfam" id="TIGR00043">
    <property type="entry name" value="rRNA maturation RNase YbeY"/>
    <property type="match status" value="1"/>
</dbReference>
<dbReference type="PANTHER" id="PTHR46986">
    <property type="entry name" value="ENDORIBONUCLEASE YBEY, CHLOROPLASTIC"/>
    <property type="match status" value="1"/>
</dbReference>
<dbReference type="PANTHER" id="PTHR46986:SF1">
    <property type="entry name" value="ENDORIBONUCLEASE YBEY, CHLOROPLASTIC"/>
    <property type="match status" value="1"/>
</dbReference>
<dbReference type="Pfam" id="PF02130">
    <property type="entry name" value="YbeY"/>
    <property type="match status" value="1"/>
</dbReference>
<dbReference type="SUPFAM" id="SSF55486">
    <property type="entry name" value="Metalloproteases ('zincins'), catalytic domain"/>
    <property type="match status" value="1"/>
</dbReference>
<dbReference type="PROSITE" id="PS01306">
    <property type="entry name" value="UPF0054"/>
    <property type="match status" value="1"/>
</dbReference>
<accession>B7MFS5</accession>
<feature type="chain" id="PRO_1000199974" description="Endoribonuclease YbeY">
    <location>
        <begin position="1"/>
        <end position="155"/>
    </location>
</feature>
<feature type="binding site" evidence="1">
    <location>
        <position position="114"/>
    </location>
    <ligand>
        <name>Zn(2+)</name>
        <dbReference type="ChEBI" id="CHEBI:29105"/>
        <note>catalytic</note>
    </ligand>
</feature>
<feature type="binding site" evidence="1">
    <location>
        <position position="118"/>
    </location>
    <ligand>
        <name>Zn(2+)</name>
        <dbReference type="ChEBI" id="CHEBI:29105"/>
        <note>catalytic</note>
    </ligand>
</feature>
<feature type="binding site" evidence="1">
    <location>
        <position position="124"/>
    </location>
    <ligand>
        <name>Zn(2+)</name>
        <dbReference type="ChEBI" id="CHEBI:29105"/>
        <note>catalytic</note>
    </ligand>
</feature>
<comment type="function">
    <text evidence="1">Single strand-specific metallo-endoribonuclease involved in late-stage 70S ribosome quality control and in maturation of the 3' terminus of the 16S rRNA.</text>
</comment>
<comment type="cofactor">
    <cofactor evidence="1">
        <name>Zn(2+)</name>
        <dbReference type="ChEBI" id="CHEBI:29105"/>
    </cofactor>
    <text evidence="1">Binds 1 zinc ion.</text>
</comment>
<comment type="subcellular location">
    <subcellularLocation>
        <location evidence="1">Cytoplasm</location>
    </subcellularLocation>
</comment>
<comment type="similarity">
    <text evidence="1">Belongs to the endoribonuclease YbeY family.</text>
</comment>
<sequence length="155" mass="17526">MSQVILDLQLACEDNSGLPEESQFQTWLNAVIPQFQEESEVTIRVVDTAESHSLNLTYRGKDKPTNVLSFPFEVPPGMEMSLLGDLVICRQVVEKEAQEQGKPLEAHWAHMVVHGSLHLLGYDHIEDDEAEEMEALETEIMLALGYEDPYIAEKE</sequence>